<protein>
    <recommendedName>
        <fullName evidence="1">Xaa-Pro dipeptidase</fullName>
        <shortName evidence="1">X-Pro dipeptidase</shortName>
        <ecNumber evidence="1">3.4.13.9</ecNumber>
    </recommendedName>
    <alternativeName>
        <fullName evidence="1">Imidodipeptidase</fullName>
    </alternativeName>
    <alternativeName>
        <fullName evidence="1">Proline dipeptidase</fullName>
        <shortName evidence="1">Prolidase</shortName>
    </alternativeName>
</protein>
<dbReference type="EC" id="3.4.13.9" evidence="1"/>
<dbReference type="EMBL" id="CP000783">
    <property type="protein sequence ID" value="ABU78910.1"/>
    <property type="molecule type" value="Genomic_DNA"/>
</dbReference>
<dbReference type="RefSeq" id="WP_012126023.1">
    <property type="nucleotide sequence ID" value="NC_009778.1"/>
</dbReference>
<dbReference type="SMR" id="A7MQN9"/>
<dbReference type="MEROPS" id="M24.003"/>
<dbReference type="KEGG" id="esa:ESA_03713"/>
<dbReference type="PATRIC" id="fig|290339.8.peg.3300"/>
<dbReference type="HOGENOM" id="CLU_050675_0_0_6"/>
<dbReference type="Proteomes" id="UP000000260">
    <property type="component" value="Chromosome"/>
</dbReference>
<dbReference type="GO" id="GO:0005829">
    <property type="term" value="C:cytosol"/>
    <property type="evidence" value="ECO:0007669"/>
    <property type="project" value="TreeGrafter"/>
</dbReference>
<dbReference type="GO" id="GO:0004177">
    <property type="term" value="F:aminopeptidase activity"/>
    <property type="evidence" value="ECO:0007669"/>
    <property type="project" value="TreeGrafter"/>
</dbReference>
<dbReference type="GO" id="GO:0046872">
    <property type="term" value="F:metal ion binding"/>
    <property type="evidence" value="ECO:0007669"/>
    <property type="project" value="UniProtKB-KW"/>
</dbReference>
<dbReference type="GO" id="GO:0008235">
    <property type="term" value="F:metalloexopeptidase activity"/>
    <property type="evidence" value="ECO:0007669"/>
    <property type="project" value="UniProtKB-UniRule"/>
</dbReference>
<dbReference type="GO" id="GO:0016795">
    <property type="term" value="F:phosphoric triester hydrolase activity"/>
    <property type="evidence" value="ECO:0007669"/>
    <property type="project" value="InterPro"/>
</dbReference>
<dbReference type="GO" id="GO:0102009">
    <property type="term" value="F:proline dipeptidase activity"/>
    <property type="evidence" value="ECO:0007669"/>
    <property type="project" value="UniProtKB-EC"/>
</dbReference>
<dbReference type="GO" id="GO:0006508">
    <property type="term" value="P:proteolysis"/>
    <property type="evidence" value="ECO:0007669"/>
    <property type="project" value="UniProtKB-KW"/>
</dbReference>
<dbReference type="CDD" id="cd01087">
    <property type="entry name" value="Prolidase"/>
    <property type="match status" value="1"/>
</dbReference>
<dbReference type="Gene3D" id="3.90.230.10">
    <property type="entry name" value="Creatinase/methionine aminopeptidase superfamily"/>
    <property type="match status" value="1"/>
</dbReference>
<dbReference type="Gene3D" id="3.40.350.10">
    <property type="entry name" value="Creatinase/prolidase N-terminal domain"/>
    <property type="match status" value="1"/>
</dbReference>
<dbReference type="HAMAP" id="MF_01279">
    <property type="entry name" value="X_Pro_dipeptid"/>
    <property type="match status" value="1"/>
</dbReference>
<dbReference type="InterPro" id="IPR029149">
    <property type="entry name" value="Creatin/AminoP/Spt16_N"/>
</dbReference>
<dbReference type="InterPro" id="IPR036005">
    <property type="entry name" value="Creatinase/aminopeptidase-like"/>
</dbReference>
<dbReference type="InterPro" id="IPR048819">
    <property type="entry name" value="PepQ_N"/>
</dbReference>
<dbReference type="InterPro" id="IPR000994">
    <property type="entry name" value="Pept_M24"/>
</dbReference>
<dbReference type="InterPro" id="IPR001131">
    <property type="entry name" value="Peptidase_M24B_aminopep-P_CS"/>
</dbReference>
<dbReference type="InterPro" id="IPR052433">
    <property type="entry name" value="X-Pro_dipept-like"/>
</dbReference>
<dbReference type="InterPro" id="IPR022846">
    <property type="entry name" value="X_Pro_dipept"/>
</dbReference>
<dbReference type="NCBIfam" id="NF010133">
    <property type="entry name" value="PRK13607.1"/>
    <property type="match status" value="1"/>
</dbReference>
<dbReference type="PANTHER" id="PTHR43226">
    <property type="entry name" value="XAA-PRO AMINOPEPTIDASE 3"/>
    <property type="match status" value="1"/>
</dbReference>
<dbReference type="PANTHER" id="PTHR43226:SF8">
    <property type="entry name" value="XAA-PRO DIPEPTIDASE"/>
    <property type="match status" value="1"/>
</dbReference>
<dbReference type="Pfam" id="PF21216">
    <property type="entry name" value="PepQ_N"/>
    <property type="match status" value="1"/>
</dbReference>
<dbReference type="Pfam" id="PF00557">
    <property type="entry name" value="Peptidase_M24"/>
    <property type="match status" value="1"/>
</dbReference>
<dbReference type="SUPFAM" id="SSF55920">
    <property type="entry name" value="Creatinase/aminopeptidase"/>
    <property type="match status" value="1"/>
</dbReference>
<dbReference type="PROSITE" id="PS00491">
    <property type="entry name" value="PROLINE_PEPTIDASE"/>
    <property type="match status" value="1"/>
</dbReference>
<proteinExistence type="inferred from homology"/>
<feature type="chain" id="PRO_1000067403" description="Xaa-Pro dipeptidase">
    <location>
        <begin position="1"/>
        <end position="443"/>
    </location>
</feature>
<feature type="binding site" evidence="1">
    <location>
        <position position="246"/>
    </location>
    <ligand>
        <name>Mn(2+)</name>
        <dbReference type="ChEBI" id="CHEBI:29035"/>
        <label>2</label>
    </ligand>
</feature>
<feature type="binding site" evidence="1">
    <location>
        <position position="257"/>
    </location>
    <ligand>
        <name>Mn(2+)</name>
        <dbReference type="ChEBI" id="CHEBI:29035"/>
        <label>1</label>
    </ligand>
</feature>
<feature type="binding site" evidence="1">
    <location>
        <position position="257"/>
    </location>
    <ligand>
        <name>Mn(2+)</name>
        <dbReference type="ChEBI" id="CHEBI:29035"/>
        <label>2</label>
    </ligand>
</feature>
<feature type="binding site" evidence="1">
    <location>
        <position position="339"/>
    </location>
    <ligand>
        <name>Mn(2+)</name>
        <dbReference type="ChEBI" id="CHEBI:29035"/>
        <label>1</label>
    </ligand>
</feature>
<feature type="binding site" evidence="1">
    <location>
        <position position="384"/>
    </location>
    <ligand>
        <name>Mn(2+)</name>
        <dbReference type="ChEBI" id="CHEBI:29035"/>
        <label>1</label>
    </ligand>
</feature>
<feature type="binding site" evidence="1">
    <location>
        <position position="423"/>
    </location>
    <ligand>
        <name>Mn(2+)</name>
        <dbReference type="ChEBI" id="CHEBI:29035"/>
        <label>1</label>
    </ligand>
</feature>
<feature type="binding site" evidence="1">
    <location>
        <position position="423"/>
    </location>
    <ligand>
        <name>Mn(2+)</name>
        <dbReference type="ChEBI" id="CHEBI:29035"/>
        <label>2</label>
    </ligand>
</feature>
<gene>
    <name evidence="1" type="primary">pepQ</name>
    <name type="ordered locus">ESA_03713</name>
</gene>
<name>PEPQ_CROS8</name>
<accession>A7MQN9</accession>
<comment type="function">
    <text evidence="1">Splits dipeptides with a prolyl residue in the C-terminal position.</text>
</comment>
<comment type="catalytic activity">
    <reaction evidence="1">
        <text>Xaa-L-Pro dipeptide + H2O = an L-alpha-amino acid + L-proline</text>
        <dbReference type="Rhea" id="RHEA:76407"/>
        <dbReference type="ChEBI" id="CHEBI:15377"/>
        <dbReference type="ChEBI" id="CHEBI:59869"/>
        <dbReference type="ChEBI" id="CHEBI:60039"/>
        <dbReference type="ChEBI" id="CHEBI:195196"/>
        <dbReference type="EC" id="3.4.13.9"/>
    </reaction>
</comment>
<comment type="cofactor">
    <cofactor evidence="1">
        <name>Mn(2+)</name>
        <dbReference type="ChEBI" id="CHEBI:29035"/>
    </cofactor>
    <text evidence="1">Binds 2 manganese ions per subunit.</text>
</comment>
<comment type="similarity">
    <text evidence="1">Belongs to the peptidase M24B family. Bacterial-type prolidase subfamily.</text>
</comment>
<evidence type="ECO:0000255" key="1">
    <source>
        <dbReference type="HAMAP-Rule" id="MF_01279"/>
    </source>
</evidence>
<organism>
    <name type="scientific">Cronobacter sakazakii (strain ATCC BAA-894)</name>
    <name type="common">Enterobacter sakazakii</name>
    <dbReference type="NCBI Taxonomy" id="290339"/>
    <lineage>
        <taxon>Bacteria</taxon>
        <taxon>Pseudomonadati</taxon>
        <taxon>Pseudomonadota</taxon>
        <taxon>Gammaproteobacteria</taxon>
        <taxon>Enterobacterales</taxon>
        <taxon>Enterobacteriaceae</taxon>
        <taxon>Cronobacter</taxon>
    </lineage>
</organism>
<reference key="1">
    <citation type="journal article" date="2010" name="PLoS ONE">
        <title>Genome sequence of Cronobacter sakazakii BAA-894 and comparative genomic hybridization analysis with other Cronobacter species.</title>
        <authorList>
            <person name="Kucerova E."/>
            <person name="Clifton S.W."/>
            <person name="Xia X.Q."/>
            <person name="Long F."/>
            <person name="Porwollik S."/>
            <person name="Fulton L."/>
            <person name="Fronick C."/>
            <person name="Minx P."/>
            <person name="Kyung K."/>
            <person name="Warren W."/>
            <person name="Fulton R."/>
            <person name="Feng D."/>
            <person name="Wollam A."/>
            <person name="Shah N."/>
            <person name="Bhonagiri V."/>
            <person name="Nash W.E."/>
            <person name="Hallsworth-Pepin K."/>
            <person name="Wilson R.K."/>
            <person name="McClelland M."/>
            <person name="Forsythe S.J."/>
        </authorList>
    </citation>
    <scope>NUCLEOTIDE SEQUENCE [LARGE SCALE GENOMIC DNA]</scope>
    <source>
        <strain>ATCC BAA-894</strain>
    </source>
</reference>
<keyword id="KW-0224">Dipeptidase</keyword>
<keyword id="KW-0378">Hydrolase</keyword>
<keyword id="KW-0464">Manganese</keyword>
<keyword id="KW-0479">Metal-binding</keyword>
<keyword id="KW-0482">Metalloprotease</keyword>
<keyword id="KW-0645">Protease</keyword>
<keyword id="KW-1185">Reference proteome</keyword>
<sequence>MDSLTTLYKNHLDTLQERTRNVLARFNLDALLIHSGELFNVFLDDHPYPFKVNPQFKAWVPVTQVPNCWLLVDGVNKPKLWFYLPVDYWHNVEPLPSAFWTEEIDIIALPKADDIGGQLPAARGNIAYIGPVPERALKLDVPADKINPKGVIDYLHFYRAYKTDYELACMREAQKTAVNGHRAAHEAFLSGMSEFDINLAYLTATGHRDTDVPYSNIVALNEHAAVLHYTRLDHRAPSEMRSFLLDAGAEYNGYAADLTRTWAADGDSDFAALIKDVNEEQLALIGTMKAGVSYIDYHIQFHQRIAKLLRRHQIVTDISEEAMVEADITGPFMPHGIGHPLGLQVHDVAGFMQDDTGTHLAAPAKYPYLRCTRVLQPRMVLTIEPGIYFIESLLVPWREGPFSKHFNWQKIEALKPFGGIRIEDNVVIHEHGVENMTRDLKLA</sequence>